<keyword id="KW-0004">4Fe-4S</keyword>
<keyword id="KW-0067">ATP-binding</keyword>
<keyword id="KW-0227">DNA damage</keyword>
<keyword id="KW-0234">DNA repair</keyword>
<keyword id="KW-0238">DNA-binding</keyword>
<keyword id="KW-0269">Exonuclease</keyword>
<keyword id="KW-0347">Helicase</keyword>
<keyword id="KW-0378">Hydrolase</keyword>
<keyword id="KW-0408">Iron</keyword>
<keyword id="KW-0411">Iron-sulfur</keyword>
<keyword id="KW-0479">Metal-binding</keyword>
<keyword id="KW-0540">Nuclease</keyword>
<keyword id="KW-0547">Nucleotide-binding</keyword>
<proteinExistence type="inferred from homology"/>
<sequence>MSLRFIYGRAGSGKSQYCLNSIKKRIEEDIDRPLILLVPEQFSFQAEKNLIEVLDEKTGFKTQVLSFKRMAYRVFNEVGGITAKHMNESGKSMLLYNIIEDNKNNLKVFKKAAKRQGFITTISDIITEFKRYNITPEIILNNLENIEEDNLKYKMEDLALIFSQFETRLHKNYIDNEDDLTILVEKLNKSKQFDNAEIWIDEFSSFSPQEYSVLEKLLLKSYRINITLCTDYLNQGRFVDTTDVFSPIKNTENKLLQIIEDNNIKLDKPIALNCDPCARFKNSIELQHLEKNMFSFPYKEYKNETKDICMLKTLNQFTEIENTAKDIIKLCRDKGCRFKDIAVITGDLEGYENIISSVFLQYNIPFFIDKKREINNNPIIVLILSALEVLSKNWTYESVFRYLKTGLLDINNEEMDILENYVLANGIKGYQWTNDKPWEHKSFSNYELEDQVEKELLAKINDIRYKAMEPIISLNKNLKNKERAKEFCEVLYEFLCSINLPDKIQNMIEDFRAEGEVEKASEYNQIWNIVMEVLDQIVEAIGGEKISLKEFFKILQTGFSEYEIGLIPPTLDQVIVGSITRLRSHNINILYIVGVNDGIFPAPLKEEGILSDDDRQFLGDKGLEIAKDTKSIAFEEQFLVYSTLTTPSKYLRLSYPIADGEGKTLRPSIIISRIKKIFTNICEENDIVKLNGEEEELKNISSAKPTFNYLISNLRKDIEGVKIDNIWGDIYKWYFENEFWIEKLNRLVKGFDYTNQSKYIETKKIRNLYGKPLKISVSRVEKFSQCPFAYFVQYGLKAKDRKIFNLSYPDLGIFMHSILEKFSHELEKKGIDWDTMDLNWAEEEIDKLINEELDNKSLDILNSSKRYEYVTKSVKKILKRSIWLIGEHIKRGNFKPSYYELSFDIDGDYPPIAMELHSGEVVNLIGRVDRVDLLQKDGATYLKIIDYKSGTKEFKLSDVYYGLQLQLLIYLDAILTELAERFGIDGEPGALLYLKLDDPIVKNIVDMSDKEIEKSIIKNLKMKGLILNDPNIIKDMDNIISGISDIIPVMVKKDGGVSEGRSSVATKEEFETLRKYVRYTIIEICEEMLEGNIEIKPYKKKDGSSCDYCIYSSVCKFDTEIRGNKYNILIDKKDEEVWEAIKKKLEC</sequence>
<comment type="function">
    <text evidence="1">The heterodimer acts as both an ATP-dependent DNA helicase and an ATP-dependent, dual-direction single-stranded exonuclease. Recognizes the chi site generating a DNA molecule suitable for the initiation of homologous recombination. The AddB subunit has 5' -&gt; 3' nuclease activity but not helicase activity.</text>
</comment>
<comment type="cofactor">
    <cofactor evidence="1">
        <name>Mg(2+)</name>
        <dbReference type="ChEBI" id="CHEBI:18420"/>
    </cofactor>
</comment>
<comment type="cofactor">
    <cofactor evidence="1">
        <name>[4Fe-4S] cluster</name>
        <dbReference type="ChEBI" id="CHEBI:49883"/>
    </cofactor>
    <text evidence="1">Binds 1 [4Fe-4S] cluster.</text>
</comment>
<comment type="subunit">
    <text evidence="1">Heterodimer of AddA and AddB.</text>
</comment>
<comment type="miscellaneous">
    <text evidence="1">Despite having conserved helicase domains, this subunit does not have helicase activity.</text>
</comment>
<comment type="similarity">
    <text evidence="1">Belongs to the helicase family. AddB/RexB type 1 subfamily.</text>
</comment>
<dbReference type="EC" id="3.1.-.-" evidence="1"/>
<dbReference type="EMBL" id="CP000962">
    <property type="protein sequence ID" value="ACA55502.1"/>
    <property type="molecule type" value="Genomic_DNA"/>
</dbReference>
<dbReference type="RefSeq" id="WP_012343473.1">
    <property type="nucleotide sequence ID" value="NC_010520.1"/>
</dbReference>
<dbReference type="SMR" id="B1KUY8"/>
<dbReference type="KEGG" id="cbl:CLK_3628"/>
<dbReference type="HOGENOM" id="CLU_007838_0_0_9"/>
<dbReference type="GO" id="GO:0051539">
    <property type="term" value="F:4 iron, 4 sulfur cluster binding"/>
    <property type="evidence" value="ECO:0007669"/>
    <property type="project" value="UniProtKB-KW"/>
</dbReference>
<dbReference type="GO" id="GO:0008409">
    <property type="term" value="F:5'-3' exonuclease activity"/>
    <property type="evidence" value="ECO:0007669"/>
    <property type="project" value="UniProtKB-UniRule"/>
</dbReference>
<dbReference type="GO" id="GO:0005524">
    <property type="term" value="F:ATP binding"/>
    <property type="evidence" value="ECO:0007669"/>
    <property type="project" value="UniProtKB-UniRule"/>
</dbReference>
<dbReference type="GO" id="GO:0003690">
    <property type="term" value="F:double-stranded DNA binding"/>
    <property type="evidence" value="ECO:0007669"/>
    <property type="project" value="UniProtKB-UniRule"/>
</dbReference>
<dbReference type="GO" id="GO:0004386">
    <property type="term" value="F:helicase activity"/>
    <property type="evidence" value="ECO:0007669"/>
    <property type="project" value="UniProtKB-KW"/>
</dbReference>
<dbReference type="GO" id="GO:0046872">
    <property type="term" value="F:metal ion binding"/>
    <property type="evidence" value="ECO:0007669"/>
    <property type="project" value="UniProtKB-KW"/>
</dbReference>
<dbReference type="GO" id="GO:0000724">
    <property type="term" value="P:double-strand break repair via homologous recombination"/>
    <property type="evidence" value="ECO:0007669"/>
    <property type="project" value="UniProtKB-UniRule"/>
</dbReference>
<dbReference type="FunFam" id="3.40.50.300:FF:002956">
    <property type="entry name" value="ATP-dependent helicase/deoxyribonuclease subunit B"/>
    <property type="match status" value="1"/>
</dbReference>
<dbReference type="FunFam" id="3.40.50.300:FF:002959">
    <property type="entry name" value="ATP-dependent helicase/deoxyribonuclease subunit B"/>
    <property type="match status" value="1"/>
</dbReference>
<dbReference type="FunFam" id="3.40.50.300:FF:003174">
    <property type="entry name" value="ATP-dependent helicase/deoxyribonuclease subunit B"/>
    <property type="match status" value="1"/>
</dbReference>
<dbReference type="Gene3D" id="3.90.320.10">
    <property type="match status" value="1"/>
</dbReference>
<dbReference type="Gene3D" id="6.10.140.1030">
    <property type="match status" value="1"/>
</dbReference>
<dbReference type="Gene3D" id="3.40.50.300">
    <property type="entry name" value="P-loop containing nucleotide triphosphate hydrolases"/>
    <property type="match status" value="3"/>
</dbReference>
<dbReference type="HAMAP" id="MF_01452">
    <property type="entry name" value="AddB_type1"/>
    <property type="match status" value="1"/>
</dbReference>
<dbReference type="InterPro" id="IPR049035">
    <property type="entry name" value="ADDB_N"/>
</dbReference>
<dbReference type="InterPro" id="IPR014140">
    <property type="entry name" value="DNA_helicase_suAddB"/>
</dbReference>
<dbReference type="InterPro" id="IPR027417">
    <property type="entry name" value="P-loop_NTPase"/>
</dbReference>
<dbReference type="InterPro" id="IPR011604">
    <property type="entry name" value="PDDEXK-like_dom_sf"/>
</dbReference>
<dbReference type="InterPro" id="IPR038726">
    <property type="entry name" value="PDDEXK_AddAB-type"/>
</dbReference>
<dbReference type="NCBIfam" id="TIGR02773">
    <property type="entry name" value="addB_Gpos"/>
    <property type="match status" value="1"/>
</dbReference>
<dbReference type="PANTHER" id="PTHR30591">
    <property type="entry name" value="RECBCD ENZYME SUBUNIT RECC"/>
    <property type="match status" value="1"/>
</dbReference>
<dbReference type="PANTHER" id="PTHR30591:SF1">
    <property type="entry name" value="RECBCD ENZYME SUBUNIT RECC"/>
    <property type="match status" value="1"/>
</dbReference>
<dbReference type="Pfam" id="PF21445">
    <property type="entry name" value="ADDB_N"/>
    <property type="match status" value="1"/>
</dbReference>
<dbReference type="Pfam" id="PF12705">
    <property type="entry name" value="PDDEXK_1"/>
    <property type="match status" value="1"/>
</dbReference>
<dbReference type="SUPFAM" id="SSF52540">
    <property type="entry name" value="P-loop containing nucleoside triphosphate hydrolases"/>
    <property type="match status" value="1"/>
</dbReference>
<organism>
    <name type="scientific">Clostridium botulinum (strain Loch Maree / Type A3)</name>
    <dbReference type="NCBI Taxonomy" id="498214"/>
    <lineage>
        <taxon>Bacteria</taxon>
        <taxon>Bacillati</taxon>
        <taxon>Bacillota</taxon>
        <taxon>Clostridia</taxon>
        <taxon>Eubacteriales</taxon>
        <taxon>Clostridiaceae</taxon>
        <taxon>Clostridium</taxon>
    </lineage>
</organism>
<gene>
    <name evidence="1" type="primary">addB</name>
    <name type="ordered locus">CLK_3628</name>
</gene>
<feature type="chain" id="PRO_0000379174" description="ATP-dependent helicase/deoxyribonuclease subunit B">
    <location>
        <begin position="1"/>
        <end position="1147"/>
    </location>
</feature>
<feature type="binding site" evidence="1">
    <location>
        <begin position="8"/>
        <end position="15"/>
    </location>
    <ligand>
        <name>ATP</name>
        <dbReference type="ChEBI" id="CHEBI:30616"/>
    </ligand>
</feature>
<feature type="binding site" evidence="1">
    <location>
        <position position="786"/>
    </location>
    <ligand>
        <name>[4Fe-4S] cluster</name>
        <dbReference type="ChEBI" id="CHEBI:49883"/>
    </ligand>
</feature>
<feature type="binding site" evidence="1">
    <location>
        <position position="1106"/>
    </location>
    <ligand>
        <name>[4Fe-4S] cluster</name>
        <dbReference type="ChEBI" id="CHEBI:49883"/>
    </ligand>
</feature>
<feature type="binding site" evidence="1">
    <location>
        <position position="1109"/>
    </location>
    <ligand>
        <name>[4Fe-4S] cluster</name>
        <dbReference type="ChEBI" id="CHEBI:49883"/>
    </ligand>
</feature>
<feature type="binding site" evidence="1">
    <location>
        <position position="1115"/>
    </location>
    <ligand>
        <name>[4Fe-4S] cluster</name>
        <dbReference type="ChEBI" id="CHEBI:49883"/>
    </ligand>
</feature>
<protein>
    <recommendedName>
        <fullName evidence="1">ATP-dependent helicase/deoxyribonuclease subunit B</fullName>
        <ecNumber evidence="1">3.1.-.-</ecNumber>
    </recommendedName>
    <alternativeName>
        <fullName evidence="1">ATP-dependent helicase/nuclease subunit AddB</fullName>
    </alternativeName>
</protein>
<reference key="1">
    <citation type="journal article" date="2007" name="PLoS ONE">
        <title>Analysis of the neurotoxin complex genes in Clostridium botulinum A1-A4 and B1 strains: BoNT/A3, /Ba4 and /B1 clusters are located within plasmids.</title>
        <authorList>
            <person name="Smith T.J."/>
            <person name="Hill K.K."/>
            <person name="Foley B.T."/>
            <person name="Detter J.C."/>
            <person name="Munk A.C."/>
            <person name="Bruce D.C."/>
            <person name="Doggett N.A."/>
            <person name="Smith L.A."/>
            <person name="Marks J.D."/>
            <person name="Xie G."/>
            <person name="Brettin T.S."/>
        </authorList>
    </citation>
    <scope>NUCLEOTIDE SEQUENCE [LARGE SCALE GENOMIC DNA]</scope>
    <source>
        <strain>Loch Maree / Type A3</strain>
    </source>
</reference>
<name>ADDB_CLOBM</name>
<evidence type="ECO:0000255" key="1">
    <source>
        <dbReference type="HAMAP-Rule" id="MF_01452"/>
    </source>
</evidence>
<accession>B1KUY8</accession>